<name>ACCH2_ARATH</name>
<sequence length="369" mass="41745">MESTKIAPSFDRASELKAFDETKTGVKGLVDSGISKIPRIFHHSSVELANPKPLPSDLLHLKTIPTIDLGGRDFQDAIKHKNAIEGIKEAAAKWGFFQVINHGVSLELLEKMKDGVRDFHEQPPEVRKDLYSRDFGRKFIYLSNFDLYTAAAANWRDTFYCYMAPDPPEPQDLPEICRDVMMEYSKQVMILGEFLFELLSEALGLNPNHLKDMECLKGLRMLCHYFPPCPEPDLTFGTSKHSDGSFLTVLLPDNIEGLQVCREGYWFDVPHVPGALIINIGDLLQLITNDKFISLKHRVLANRATRARVSVACFFHTHVKPNPRVYGPIKELVSEENPPKYRETTIRDYATYFNGKGLGGTSALLDFKV</sequence>
<accession>Q9C5K7</accession>
<accession>Q3E7P1</accession>
<accession>Q9SHK4</accession>
<organism>
    <name type="scientific">Arabidopsis thaliana</name>
    <name type="common">Mouse-ear cress</name>
    <dbReference type="NCBI Taxonomy" id="3702"/>
    <lineage>
        <taxon>Eukaryota</taxon>
        <taxon>Viridiplantae</taxon>
        <taxon>Streptophyta</taxon>
        <taxon>Embryophyta</taxon>
        <taxon>Tracheophyta</taxon>
        <taxon>Spermatophyta</taxon>
        <taxon>Magnoliopsida</taxon>
        <taxon>eudicotyledons</taxon>
        <taxon>Gunneridae</taxon>
        <taxon>Pentapetalae</taxon>
        <taxon>rosids</taxon>
        <taxon>malvids</taxon>
        <taxon>Brassicales</taxon>
        <taxon>Brassicaceae</taxon>
        <taxon>Camelineae</taxon>
        <taxon>Arabidopsis</taxon>
    </lineage>
</organism>
<keyword id="KW-0025">Alternative splicing</keyword>
<keyword id="KW-0408">Iron</keyword>
<keyword id="KW-0479">Metal-binding</keyword>
<keyword id="KW-0560">Oxidoreductase</keyword>
<keyword id="KW-1185">Reference proteome</keyword>
<evidence type="ECO:0000250" key="1"/>
<evidence type="ECO:0000255" key="2">
    <source>
        <dbReference type="PROSITE-ProRule" id="PRU00805"/>
    </source>
</evidence>
<evidence type="ECO:0000305" key="3"/>
<protein>
    <recommendedName>
        <fullName>1-aminocyclopropane-1-carboxylate oxidase homolog 2</fullName>
    </recommendedName>
</protein>
<dbReference type="EMBL" id="AC007592">
    <property type="protein sequence ID" value="AAF24827.1"/>
    <property type="status" value="ALT_SEQ"/>
    <property type="molecule type" value="Genomic_DNA"/>
</dbReference>
<dbReference type="EMBL" id="CP002684">
    <property type="protein sequence ID" value="AEE28014.1"/>
    <property type="molecule type" value="Genomic_DNA"/>
</dbReference>
<dbReference type="EMBL" id="CP002684">
    <property type="protein sequence ID" value="AEE28015.1"/>
    <property type="molecule type" value="Genomic_DNA"/>
</dbReference>
<dbReference type="EMBL" id="AF360185">
    <property type="protein sequence ID" value="AAK25895.1"/>
    <property type="molecule type" value="mRNA"/>
</dbReference>
<dbReference type="EMBL" id="AY040000">
    <property type="protein sequence ID" value="AAK64077.1"/>
    <property type="molecule type" value="mRNA"/>
</dbReference>
<dbReference type="EMBL" id="AK226396">
    <property type="protein sequence ID" value="BAE98542.1"/>
    <property type="molecule type" value="mRNA"/>
</dbReference>
<dbReference type="PIR" id="D86201">
    <property type="entry name" value="D86201"/>
</dbReference>
<dbReference type="RefSeq" id="NP_172149.1">
    <molecule id="Q9C5K7-1"/>
    <property type="nucleotide sequence ID" value="NM_100541.4"/>
</dbReference>
<dbReference type="RefSeq" id="NP_973774.1">
    <molecule id="Q9C5K7-2"/>
    <property type="nucleotide sequence ID" value="NM_202045.3"/>
</dbReference>
<dbReference type="SMR" id="Q9C5K7"/>
<dbReference type="FunCoup" id="Q9C5K7">
    <property type="interactions" value="140"/>
</dbReference>
<dbReference type="STRING" id="3702.Q9C5K7"/>
<dbReference type="PaxDb" id="3702-AT1G06640.1"/>
<dbReference type="ProteomicsDB" id="244569">
    <molecule id="Q9C5K7-1"/>
</dbReference>
<dbReference type="EnsemblPlants" id="AT1G06640.1">
    <molecule id="Q9C5K7-1"/>
    <property type="protein sequence ID" value="AT1G06640.1"/>
    <property type="gene ID" value="AT1G06640"/>
</dbReference>
<dbReference type="EnsemblPlants" id="AT1G06640.2">
    <molecule id="Q9C5K7-2"/>
    <property type="protein sequence ID" value="AT1G06640.2"/>
    <property type="gene ID" value="AT1G06640"/>
</dbReference>
<dbReference type="GeneID" id="837173"/>
<dbReference type="Gramene" id="AT1G06640.1">
    <molecule id="Q9C5K7-1"/>
    <property type="protein sequence ID" value="AT1G06640.1"/>
    <property type="gene ID" value="AT1G06640"/>
</dbReference>
<dbReference type="Gramene" id="AT1G06640.2">
    <molecule id="Q9C5K7-2"/>
    <property type="protein sequence ID" value="AT1G06640.2"/>
    <property type="gene ID" value="AT1G06640"/>
</dbReference>
<dbReference type="KEGG" id="ath:AT1G06640"/>
<dbReference type="Araport" id="AT1G06640"/>
<dbReference type="TAIR" id="AT1G06640"/>
<dbReference type="eggNOG" id="KOG0143">
    <property type="taxonomic scope" value="Eukaryota"/>
</dbReference>
<dbReference type="HOGENOM" id="CLU_010119_0_0_1"/>
<dbReference type="InParanoid" id="Q9C5K7"/>
<dbReference type="OMA" id="YWIDVPH"/>
<dbReference type="PhylomeDB" id="Q9C5K7"/>
<dbReference type="BioCyc" id="ARA:AT1G06640-MONOMER"/>
<dbReference type="PRO" id="PR:Q9C5K7"/>
<dbReference type="Proteomes" id="UP000006548">
    <property type="component" value="Chromosome 1"/>
</dbReference>
<dbReference type="ExpressionAtlas" id="Q9C5K7">
    <property type="expression patterns" value="baseline and differential"/>
</dbReference>
<dbReference type="GO" id="GO:0051213">
    <property type="term" value="F:dioxygenase activity"/>
    <property type="evidence" value="ECO:0007669"/>
    <property type="project" value="UniProtKB-ARBA"/>
</dbReference>
<dbReference type="GO" id="GO:0046872">
    <property type="term" value="F:metal ion binding"/>
    <property type="evidence" value="ECO:0007669"/>
    <property type="project" value="UniProtKB-KW"/>
</dbReference>
<dbReference type="GO" id="GO:0009058">
    <property type="term" value="P:biosynthetic process"/>
    <property type="evidence" value="ECO:0007669"/>
    <property type="project" value="UniProtKB-ARBA"/>
</dbReference>
<dbReference type="FunFam" id="2.60.120.330:FF:000005">
    <property type="entry name" value="1-aminocyclopropane-1-carboxylate oxidase homolog 1"/>
    <property type="match status" value="1"/>
</dbReference>
<dbReference type="Gene3D" id="2.60.120.330">
    <property type="entry name" value="B-lactam Antibiotic, Isopenicillin N Synthase, Chain"/>
    <property type="match status" value="1"/>
</dbReference>
<dbReference type="InterPro" id="IPR026992">
    <property type="entry name" value="DIOX_N"/>
</dbReference>
<dbReference type="InterPro" id="IPR044861">
    <property type="entry name" value="IPNS-like_FE2OG_OXY"/>
</dbReference>
<dbReference type="InterPro" id="IPR027443">
    <property type="entry name" value="IPNS-like_sf"/>
</dbReference>
<dbReference type="InterPro" id="IPR005123">
    <property type="entry name" value="Oxoglu/Fe-dep_dioxygenase_dom"/>
</dbReference>
<dbReference type="PANTHER" id="PTHR10209:SF876">
    <property type="entry name" value="1-AMINOCYCLOPROPANE-1-CARBOXYLATE OXIDASE HOMOLOG 2"/>
    <property type="match status" value="1"/>
</dbReference>
<dbReference type="PANTHER" id="PTHR10209">
    <property type="entry name" value="OXIDOREDUCTASE, 2OG-FE II OXYGENASE FAMILY PROTEIN"/>
    <property type="match status" value="1"/>
</dbReference>
<dbReference type="Pfam" id="PF03171">
    <property type="entry name" value="2OG-FeII_Oxy"/>
    <property type="match status" value="1"/>
</dbReference>
<dbReference type="Pfam" id="PF14226">
    <property type="entry name" value="DIOX_N"/>
    <property type="match status" value="1"/>
</dbReference>
<dbReference type="SUPFAM" id="SSF51197">
    <property type="entry name" value="Clavaminate synthase-like"/>
    <property type="match status" value="1"/>
</dbReference>
<dbReference type="PROSITE" id="PS51471">
    <property type="entry name" value="FE2OG_OXY"/>
    <property type="match status" value="1"/>
</dbReference>
<comment type="cofactor">
    <cofactor evidence="1">
        <name>Fe cation</name>
        <dbReference type="ChEBI" id="CHEBI:24875"/>
    </cofactor>
</comment>
<comment type="alternative products">
    <event type="alternative splicing"/>
    <isoform>
        <id>Q9C5K7-1</id>
        <name>1</name>
        <sequence type="displayed"/>
    </isoform>
    <isoform>
        <id>Q9C5K7-2</id>
        <name>2</name>
        <sequence type="described" ref="VSP_041038 VSP_041039"/>
    </isoform>
    <text>A number of isoforms are produced. According to EST sequences.</text>
</comment>
<comment type="similarity">
    <text evidence="3">Belongs to the iron/ascorbate-dependent oxidoreductase family.</text>
</comment>
<comment type="sequence caution" evidence="3">
    <conflict type="erroneous gene model prediction">
        <sequence resource="EMBL-CDS" id="AAF24827"/>
    </conflict>
    <text>The predicted gene At1g06630 has been split into 4 genes: At1g06620, At1g06630, At1g06640 and At1g06650.</text>
</comment>
<feature type="chain" id="PRO_0000274938" description="1-aminocyclopropane-1-carboxylate oxidase homolog 2">
    <location>
        <begin position="1"/>
        <end position="369"/>
    </location>
</feature>
<feature type="domain" description="Fe2OG dioxygenase" evidence="2">
    <location>
        <begin position="217"/>
        <end position="318"/>
    </location>
</feature>
<feature type="binding site" evidence="2">
    <location>
        <position position="241"/>
    </location>
    <ligand>
        <name>Fe cation</name>
        <dbReference type="ChEBI" id="CHEBI:24875"/>
    </ligand>
</feature>
<feature type="binding site" evidence="2">
    <location>
        <position position="243"/>
    </location>
    <ligand>
        <name>Fe cation</name>
        <dbReference type="ChEBI" id="CHEBI:24875"/>
    </ligand>
</feature>
<feature type="binding site" evidence="2">
    <location>
        <position position="297"/>
    </location>
    <ligand>
        <name>Fe cation</name>
        <dbReference type="ChEBI" id="CHEBI:24875"/>
    </ligand>
</feature>
<feature type="splice variant" id="VSP_041038" description="In isoform 2." evidence="3">
    <original>LITNDKFISLKHRVLANRATRARVSVACFFHTHVKPN</original>
    <variation>ASLRNQYMFASSDFTSLFTMLDLFKKSSSWFKVFFFF</variation>
    <location>
        <begin position="286"/>
        <end position="322"/>
    </location>
</feature>
<feature type="splice variant" id="VSP_041039" description="In isoform 2." evidence="3">
    <location>
        <begin position="323"/>
        <end position="369"/>
    </location>
</feature>
<reference key="1">
    <citation type="journal article" date="2000" name="Nature">
        <title>Sequence and analysis of chromosome 1 of the plant Arabidopsis thaliana.</title>
        <authorList>
            <person name="Theologis A."/>
            <person name="Ecker J.R."/>
            <person name="Palm C.J."/>
            <person name="Federspiel N.A."/>
            <person name="Kaul S."/>
            <person name="White O."/>
            <person name="Alonso J."/>
            <person name="Altafi H."/>
            <person name="Araujo R."/>
            <person name="Bowman C.L."/>
            <person name="Brooks S.Y."/>
            <person name="Buehler E."/>
            <person name="Chan A."/>
            <person name="Chao Q."/>
            <person name="Chen H."/>
            <person name="Cheuk R.F."/>
            <person name="Chin C.W."/>
            <person name="Chung M.K."/>
            <person name="Conn L."/>
            <person name="Conway A.B."/>
            <person name="Conway A.R."/>
            <person name="Creasy T.H."/>
            <person name="Dewar K."/>
            <person name="Dunn P."/>
            <person name="Etgu P."/>
            <person name="Feldblyum T.V."/>
            <person name="Feng J.-D."/>
            <person name="Fong B."/>
            <person name="Fujii C.Y."/>
            <person name="Gill J.E."/>
            <person name="Goldsmith A.D."/>
            <person name="Haas B."/>
            <person name="Hansen N.F."/>
            <person name="Hughes B."/>
            <person name="Huizar L."/>
            <person name="Hunter J.L."/>
            <person name="Jenkins J."/>
            <person name="Johnson-Hopson C."/>
            <person name="Khan S."/>
            <person name="Khaykin E."/>
            <person name="Kim C.J."/>
            <person name="Koo H.L."/>
            <person name="Kremenetskaia I."/>
            <person name="Kurtz D.B."/>
            <person name="Kwan A."/>
            <person name="Lam B."/>
            <person name="Langin-Hooper S."/>
            <person name="Lee A."/>
            <person name="Lee J.M."/>
            <person name="Lenz C.A."/>
            <person name="Li J.H."/>
            <person name="Li Y.-P."/>
            <person name="Lin X."/>
            <person name="Liu S.X."/>
            <person name="Liu Z.A."/>
            <person name="Luros J.S."/>
            <person name="Maiti R."/>
            <person name="Marziali A."/>
            <person name="Militscher J."/>
            <person name="Miranda M."/>
            <person name="Nguyen M."/>
            <person name="Nierman W.C."/>
            <person name="Osborne B.I."/>
            <person name="Pai G."/>
            <person name="Peterson J."/>
            <person name="Pham P.K."/>
            <person name="Rizzo M."/>
            <person name="Rooney T."/>
            <person name="Rowley D."/>
            <person name="Sakano H."/>
            <person name="Salzberg S.L."/>
            <person name="Schwartz J.R."/>
            <person name="Shinn P."/>
            <person name="Southwick A.M."/>
            <person name="Sun H."/>
            <person name="Tallon L.J."/>
            <person name="Tambunga G."/>
            <person name="Toriumi M.J."/>
            <person name="Town C.D."/>
            <person name="Utterback T."/>
            <person name="Van Aken S."/>
            <person name="Vaysberg M."/>
            <person name="Vysotskaia V.S."/>
            <person name="Walker M."/>
            <person name="Wu D."/>
            <person name="Yu G."/>
            <person name="Fraser C.M."/>
            <person name="Venter J.C."/>
            <person name="Davis R.W."/>
        </authorList>
    </citation>
    <scope>NUCLEOTIDE SEQUENCE [LARGE SCALE GENOMIC DNA]</scope>
    <source>
        <strain>cv. Columbia</strain>
    </source>
</reference>
<reference key="2">
    <citation type="journal article" date="2017" name="Plant J.">
        <title>Araport11: a complete reannotation of the Arabidopsis thaliana reference genome.</title>
        <authorList>
            <person name="Cheng C.Y."/>
            <person name="Krishnakumar V."/>
            <person name="Chan A.P."/>
            <person name="Thibaud-Nissen F."/>
            <person name="Schobel S."/>
            <person name="Town C.D."/>
        </authorList>
    </citation>
    <scope>GENOME REANNOTATION</scope>
    <source>
        <strain>cv. Columbia</strain>
    </source>
</reference>
<reference key="3">
    <citation type="journal article" date="2003" name="Science">
        <title>Empirical analysis of transcriptional activity in the Arabidopsis genome.</title>
        <authorList>
            <person name="Yamada K."/>
            <person name="Lim J."/>
            <person name="Dale J.M."/>
            <person name="Chen H."/>
            <person name="Shinn P."/>
            <person name="Palm C.J."/>
            <person name="Southwick A.M."/>
            <person name="Wu H.C."/>
            <person name="Kim C.J."/>
            <person name="Nguyen M."/>
            <person name="Pham P.K."/>
            <person name="Cheuk R.F."/>
            <person name="Karlin-Newmann G."/>
            <person name="Liu S.X."/>
            <person name="Lam B."/>
            <person name="Sakano H."/>
            <person name="Wu T."/>
            <person name="Yu G."/>
            <person name="Miranda M."/>
            <person name="Quach H.L."/>
            <person name="Tripp M."/>
            <person name="Chang C.H."/>
            <person name="Lee J.M."/>
            <person name="Toriumi M.J."/>
            <person name="Chan M.M."/>
            <person name="Tang C.C."/>
            <person name="Onodera C.S."/>
            <person name="Deng J.M."/>
            <person name="Akiyama K."/>
            <person name="Ansari Y."/>
            <person name="Arakawa T."/>
            <person name="Banh J."/>
            <person name="Banno F."/>
            <person name="Bowser L."/>
            <person name="Brooks S.Y."/>
            <person name="Carninci P."/>
            <person name="Chao Q."/>
            <person name="Choy N."/>
            <person name="Enju A."/>
            <person name="Goldsmith A.D."/>
            <person name="Gurjal M."/>
            <person name="Hansen N.F."/>
            <person name="Hayashizaki Y."/>
            <person name="Johnson-Hopson C."/>
            <person name="Hsuan V.W."/>
            <person name="Iida K."/>
            <person name="Karnes M."/>
            <person name="Khan S."/>
            <person name="Koesema E."/>
            <person name="Ishida J."/>
            <person name="Jiang P.X."/>
            <person name="Jones T."/>
            <person name="Kawai J."/>
            <person name="Kamiya A."/>
            <person name="Meyers C."/>
            <person name="Nakajima M."/>
            <person name="Narusaka M."/>
            <person name="Seki M."/>
            <person name="Sakurai T."/>
            <person name="Satou M."/>
            <person name="Tamse R."/>
            <person name="Vaysberg M."/>
            <person name="Wallender E.K."/>
            <person name="Wong C."/>
            <person name="Yamamura Y."/>
            <person name="Yuan S."/>
            <person name="Shinozaki K."/>
            <person name="Davis R.W."/>
            <person name="Theologis A."/>
            <person name="Ecker J.R."/>
        </authorList>
    </citation>
    <scope>NUCLEOTIDE SEQUENCE [LARGE SCALE MRNA] (ISOFORM 1)</scope>
    <source>
        <strain>cv. Columbia</strain>
    </source>
</reference>
<reference key="4">
    <citation type="submission" date="2006-07" db="EMBL/GenBank/DDBJ databases">
        <title>Large-scale analysis of RIKEN Arabidopsis full-length (RAFL) cDNAs.</title>
        <authorList>
            <person name="Totoki Y."/>
            <person name="Seki M."/>
            <person name="Ishida J."/>
            <person name="Nakajima M."/>
            <person name="Enju A."/>
            <person name="Kamiya A."/>
            <person name="Narusaka M."/>
            <person name="Shin-i T."/>
            <person name="Nakagawa M."/>
            <person name="Sakamoto N."/>
            <person name="Oishi K."/>
            <person name="Kohara Y."/>
            <person name="Kobayashi M."/>
            <person name="Toyoda A."/>
            <person name="Sakaki Y."/>
            <person name="Sakurai T."/>
            <person name="Iida K."/>
            <person name="Akiyama K."/>
            <person name="Satou M."/>
            <person name="Toyoda T."/>
            <person name="Konagaya A."/>
            <person name="Carninci P."/>
            <person name="Kawai J."/>
            <person name="Hayashizaki Y."/>
            <person name="Shinozaki K."/>
        </authorList>
    </citation>
    <scope>NUCLEOTIDE SEQUENCE [LARGE SCALE MRNA] (ISOFORM 1)</scope>
    <source>
        <strain>cv. Columbia</strain>
    </source>
</reference>
<proteinExistence type="evidence at transcript level"/>
<gene>
    <name type="ordered locus">At1g06640</name>
    <name type="ORF">F12K11.27</name>
    <name type="ORF">F12K11.6</name>
</gene>